<organism>
    <name type="scientific">Olivierus martensii</name>
    <name type="common">Manchurian scorpion</name>
    <name type="synonym">Mesobuthus martensii</name>
    <dbReference type="NCBI Taxonomy" id="34649"/>
    <lineage>
        <taxon>Eukaryota</taxon>
        <taxon>Metazoa</taxon>
        <taxon>Ecdysozoa</taxon>
        <taxon>Arthropoda</taxon>
        <taxon>Chelicerata</taxon>
        <taxon>Arachnida</taxon>
        <taxon>Scorpiones</taxon>
        <taxon>Buthida</taxon>
        <taxon>Buthoidea</taxon>
        <taxon>Buthidae</taxon>
        <taxon>Olivierus</taxon>
    </lineage>
</organism>
<reference key="1">
    <citation type="journal article" date="2001" name="IUBMB Life">
        <title>Precursor of a novel scorpion venom peptide (BmKn1) with no disulfide bridge from Buthus martensii Karsch.</title>
        <authorList>
            <person name="Zeng X.-C."/>
            <person name="Li W.-X."/>
            <person name="Wang S.-X."/>
            <person name="Zhu S.-Y."/>
            <person name="Luo F."/>
        </authorList>
    </citation>
    <scope>NUCLEOTIDE SEQUENCE [MRNA]</scope>
    <source>
        <tissue>Venom gland</tissue>
    </source>
</reference>
<reference key="2">
    <citation type="journal article" date="2021" name="Microb. Pathog.">
        <title>Identification of the scorpion venom-derived antimicrobial peptide Hp1404 as a new antimicrobial agent against carbapenem-resistant Acinetobacter baumannii.</title>
        <authorList>
            <person name="Luo X."/>
            <person name="Ye X."/>
            <person name="Ding L."/>
            <person name="Zhu W."/>
            <person name="Zhao Z."/>
            <person name="Luo D."/>
            <person name="Liu N."/>
            <person name="Sun L."/>
            <person name="Chen Z."/>
        </authorList>
    </citation>
    <scope>SYNTHESIS OF 24-37 (AMIDATED PEPTIDE)</scope>
    <scope>PROBABLE AMIDATION AT PHE-36</scope>
</reference>
<reference key="3">
    <citation type="journal article" date="2005" name="IUBMB Life">
        <title>Scorpion venom peptides without disulfide bridges.</title>
        <authorList>
            <person name="Zeng X.C."/>
            <person name="Corzo G."/>
            <person name="Hahin R."/>
        </authorList>
    </citation>
    <scope>NOMENCLATURE</scope>
</reference>
<feature type="signal peptide" evidence="2">
    <location>
        <begin position="1"/>
        <end position="23"/>
    </location>
</feature>
<feature type="peptide" id="PRO_0000231499" description="Peptide BmKn1" evidence="7">
    <location>
        <begin position="24"/>
        <end position="36"/>
    </location>
</feature>
<feature type="propeptide" id="PRO_0000289971" evidence="7">
    <location>
        <begin position="40"/>
        <end position="70"/>
    </location>
</feature>
<feature type="modified residue" description="Phenylalanine amide" evidence="8">
    <location>
        <position position="36"/>
    </location>
</feature>
<name>NDB4U_OLIMR</name>
<sequence>MKSQTFFLLFLVVLLLAISQSEAFIGAVAGLLSKIFGKRSMRDMDTMKYLYDPSLSAADLKTLQKLMENY</sequence>
<accession>Q9GQW4</accession>
<evidence type="ECO:0000250" key="1"/>
<evidence type="ECO:0000255" key="2"/>
<evidence type="ECO:0000303" key="3">
    <source>
    </source>
</evidence>
<evidence type="ECO:0000303" key="4">
    <source>
    </source>
</evidence>
<evidence type="ECO:0000303" key="5">
    <source>
    </source>
</evidence>
<evidence type="ECO:0000305" key="6"/>
<evidence type="ECO:0000305" key="7">
    <source>
    </source>
</evidence>
<evidence type="ECO:0000305" key="8">
    <source>
    </source>
</evidence>
<keyword id="KW-0027">Amidation</keyword>
<keyword id="KW-0044">Antibiotic</keyword>
<keyword id="KW-0929">Antimicrobial</keyword>
<keyword id="KW-0165">Cleavage on pair of basic residues</keyword>
<keyword id="KW-0472">Membrane</keyword>
<keyword id="KW-0964">Secreted</keyword>
<keyword id="KW-0732">Signal</keyword>
<keyword id="KW-1052">Target cell membrane</keyword>
<keyword id="KW-1053">Target membrane</keyword>
<protein>
    <recommendedName>
        <fullName evidence="3 5">Peptide BmKn1</fullName>
    </recommendedName>
    <alternativeName>
        <fullName>Biologically active peptide 4</fullName>
    </alternativeName>
    <alternativeName>
        <fullName evidence="4">Non-disulfide-bridged peptide 5.1</fullName>
        <shortName evidence="4">NDBP-5.1</shortName>
    </alternativeName>
</protein>
<comment type="function">
    <text evidence="1">Antibacterial peptide.</text>
</comment>
<comment type="subcellular location">
    <subcellularLocation>
        <location evidence="7">Secreted</location>
    </subcellularLocation>
    <subcellularLocation>
        <location evidence="6">Target cell membrane</location>
    </subcellularLocation>
</comment>
<comment type="tissue specificity">
    <text evidence="7">Expressed by the venom gland.</text>
</comment>
<comment type="domain">
    <text evidence="8">Amphipathic and cationic peptide with an alpha-helical structure.</text>
</comment>
<comment type="similarity">
    <text evidence="6">Belongs to the non-disulfide-bridged peptide (NDBP) superfamily. Short antimicrobial peptide (group 4) family.</text>
</comment>
<dbReference type="EMBL" id="AF151795">
    <property type="protein sequence ID" value="AAG39639.1"/>
    <property type="molecule type" value="mRNA"/>
</dbReference>
<dbReference type="EMBL" id="AF150010">
    <property type="protein sequence ID" value="AAK71696.1"/>
    <property type="molecule type" value="mRNA"/>
</dbReference>
<dbReference type="SMR" id="Q9GQW4"/>
<dbReference type="GO" id="GO:0005576">
    <property type="term" value="C:extracellular region"/>
    <property type="evidence" value="ECO:0007669"/>
    <property type="project" value="UniProtKB-SubCell"/>
</dbReference>
<dbReference type="GO" id="GO:0016020">
    <property type="term" value="C:membrane"/>
    <property type="evidence" value="ECO:0007669"/>
    <property type="project" value="UniProtKB-KW"/>
</dbReference>
<dbReference type="GO" id="GO:0044218">
    <property type="term" value="C:other organism cell membrane"/>
    <property type="evidence" value="ECO:0007669"/>
    <property type="project" value="UniProtKB-KW"/>
</dbReference>
<dbReference type="GO" id="GO:0042742">
    <property type="term" value="P:defense response to bacterium"/>
    <property type="evidence" value="ECO:0007669"/>
    <property type="project" value="UniProtKB-KW"/>
</dbReference>
<proteinExistence type="evidence at protein level"/>